<accession>Q5R6L2</accession>
<accession>Q5RD66</accession>
<name>CYRIA_PONAB</name>
<feature type="chain" id="PRO_0000290015" description="CYFIP-related Rac1 interactor A">
    <location>
        <begin position="1"/>
        <end position="323"/>
    </location>
</feature>
<feature type="sequence conflict" description="In Ref. 1; CAH90291." evidence="3" ref="1">
    <original>A</original>
    <variation>V</variation>
    <location>
        <position position="78"/>
    </location>
</feature>
<feature type="sequence conflict" description="In Ref. 1; CAH90291." evidence="3" ref="1">
    <original>M</original>
    <variation>T</variation>
    <location>
        <position position="182"/>
    </location>
</feature>
<feature type="sequence conflict" description="In Ref. 1; CAH90291." evidence="3" ref="1">
    <original>Y</original>
    <variation>H</variation>
    <location>
        <position position="190"/>
    </location>
</feature>
<protein>
    <recommendedName>
        <fullName>CYFIP-related Rac1 interactor A</fullName>
    </recommendedName>
</protein>
<gene>
    <name type="primary">CYRIA</name>
    <name type="synonym">FAM49A</name>
</gene>
<dbReference type="EMBL" id="CR858051">
    <property type="protein sequence ID" value="CAH90291.1"/>
    <property type="molecule type" value="mRNA"/>
</dbReference>
<dbReference type="EMBL" id="CR860476">
    <property type="protein sequence ID" value="CAH92598.1"/>
    <property type="molecule type" value="mRNA"/>
</dbReference>
<dbReference type="RefSeq" id="NP_001125133.1">
    <property type="nucleotide sequence ID" value="NM_001131661.1"/>
</dbReference>
<dbReference type="RefSeq" id="XP_024097663.1">
    <property type="nucleotide sequence ID" value="XM_024241895.3"/>
</dbReference>
<dbReference type="RefSeq" id="XP_054401554.1">
    <property type="nucleotide sequence ID" value="XM_054545579.2"/>
</dbReference>
<dbReference type="SMR" id="Q5R6L2"/>
<dbReference type="FunCoup" id="Q5R6L2">
    <property type="interactions" value="12"/>
</dbReference>
<dbReference type="STRING" id="9601.ENSPPYP00000014105"/>
<dbReference type="Ensembl" id="ENSPPYT00000014676.3">
    <property type="protein sequence ID" value="ENSPPYP00000014105.2"/>
    <property type="gene ID" value="ENSPPYG00000012634.3"/>
</dbReference>
<dbReference type="GeneID" id="100172018"/>
<dbReference type="KEGG" id="pon:100172018"/>
<dbReference type="CTD" id="81553"/>
<dbReference type="eggNOG" id="KOG3951">
    <property type="taxonomic scope" value="Eukaryota"/>
</dbReference>
<dbReference type="GeneTree" id="ENSGT00390000015159"/>
<dbReference type="HOGENOM" id="CLU_056470_0_0_1"/>
<dbReference type="InParanoid" id="Q5R6L2"/>
<dbReference type="OMA" id="MANVCHD"/>
<dbReference type="OrthoDB" id="60973at2759"/>
<dbReference type="TreeFam" id="TF314541"/>
<dbReference type="Proteomes" id="UP000001595">
    <property type="component" value="Chromosome 2A"/>
</dbReference>
<dbReference type="GO" id="GO:0016020">
    <property type="term" value="C:membrane"/>
    <property type="evidence" value="ECO:0007669"/>
    <property type="project" value="UniProtKB-SubCell"/>
</dbReference>
<dbReference type="GO" id="GO:0031267">
    <property type="term" value="F:small GTPase binding"/>
    <property type="evidence" value="ECO:0007669"/>
    <property type="project" value="InterPro"/>
</dbReference>
<dbReference type="GO" id="GO:0030833">
    <property type="term" value="P:regulation of actin filament polymerization"/>
    <property type="evidence" value="ECO:0007669"/>
    <property type="project" value="InterPro"/>
</dbReference>
<dbReference type="InterPro" id="IPR039789">
    <property type="entry name" value="CYRI"/>
</dbReference>
<dbReference type="InterPro" id="IPR009828">
    <property type="entry name" value="CYRIA/CYRIB_Rac1-bd"/>
</dbReference>
<dbReference type="PANTHER" id="PTHR12422">
    <property type="entry name" value="GH09096P"/>
    <property type="match status" value="1"/>
</dbReference>
<dbReference type="Pfam" id="PF07159">
    <property type="entry name" value="CYRIA-B_Rac1-bd"/>
    <property type="match status" value="1"/>
</dbReference>
<organism>
    <name type="scientific">Pongo abelii</name>
    <name type="common">Sumatran orangutan</name>
    <name type="synonym">Pongo pygmaeus abelii</name>
    <dbReference type="NCBI Taxonomy" id="9601"/>
    <lineage>
        <taxon>Eukaryota</taxon>
        <taxon>Metazoa</taxon>
        <taxon>Chordata</taxon>
        <taxon>Craniata</taxon>
        <taxon>Vertebrata</taxon>
        <taxon>Euteleostomi</taxon>
        <taxon>Mammalia</taxon>
        <taxon>Eutheria</taxon>
        <taxon>Euarchontoglires</taxon>
        <taxon>Primates</taxon>
        <taxon>Haplorrhini</taxon>
        <taxon>Catarrhini</taxon>
        <taxon>Hominidae</taxon>
        <taxon>Pongo</taxon>
    </lineage>
</organism>
<comment type="function">
    <text evidence="1">May negatively regulate RAC1 signaling and RAC1-driven cytoskeletal remodeling. May regulate chemotaxis, cell migration and epithelial polarization by controlling the polarity, plasticity, duration and extent of protrusions.</text>
</comment>
<comment type="subunit">
    <text evidence="2">Interacts with RAC1 (GTP-bound form preferentially).</text>
</comment>
<comment type="subcellular location">
    <subcellularLocation>
        <location evidence="2">Membrane</location>
        <topology evidence="2">Lipid-anchor</topology>
    </subcellularLocation>
</comment>
<comment type="similarity">
    <text evidence="3">Belongs to the CYRI family.</text>
</comment>
<keyword id="KW-0449">Lipoprotein</keyword>
<keyword id="KW-0472">Membrane</keyword>
<keyword id="KW-1185">Reference proteome</keyword>
<proteinExistence type="evidence at transcript level"/>
<reference key="1">
    <citation type="submission" date="2004-11" db="EMBL/GenBank/DDBJ databases">
        <authorList>
            <consortium name="The German cDNA consortium"/>
        </authorList>
    </citation>
    <scope>NUCLEOTIDE SEQUENCE [LARGE SCALE MRNA]</scope>
    <source>
        <tissue>Brain cortex</tissue>
    </source>
</reference>
<evidence type="ECO:0000250" key="1">
    <source>
        <dbReference type="UniProtKB" id="Q9H0Q0"/>
    </source>
</evidence>
<evidence type="ECO:0000250" key="2">
    <source>
        <dbReference type="UniProtKB" id="Q9NUQ9"/>
    </source>
</evidence>
<evidence type="ECO:0000305" key="3"/>
<sequence length="323" mass="37313">MGNLLKVLTREIENYPHFFLDFENAQPTEGEREIWNQISAVLQDSESILADLQAYKGAGPEIRDAIQNPNDIQLQEKAWNAVCPLVVRLKRFYEFSIRLEKALQSLLESLTCPPYTPTQHLEREQALAKEFAEILHFTLRFDELKMRNPAIQNDFSYYRRTISRNRINNMHLDIENEVNNEMANRMSLFYAEATPMLKTLSNATMHFVSENKTLPIENTTDCLSTMTSVCKVMLETPEYRSRFTSEETLMFCMRVMVGVIILYDHVHPVGAFCKTSKIDMKGCIKVLKEQAPDSVEGLLNALRFTTKHLNDESTSKQIRAMLQ</sequence>